<gene>
    <name evidence="1" type="primary">rnz</name>
    <name type="ordered locus">Sca_1129</name>
</gene>
<sequence>MEITFFGTGAALPTKERNTQAIALNLDPYSNSIWLFDAGEGTQHQILHHSIKLGKINHIFITHMHGDHIYGLPGLLTSRSFQGGENKPLTIVGPRGIKNYVETTLQASLSRLNYPVTFIEIDDQLHYHHEGFTVSAYNLNHGVPSFGYRIEAPTTSGKIDVASLREIGMEPGPKYQEVKNSDSFIFNDKVYQSSDFKGEEKVGPKIAIFGDTMPCENELKLADNADLLVHEATYIDGDRSLADSHHHSHINDVLHLLEATNSKQALLNHISNRYNLSDIDVIYAELQNQYPNLKFKFVRDFDTFEI</sequence>
<comment type="function">
    <text evidence="1">Zinc phosphodiesterase, which displays some tRNA 3'-processing endonuclease activity. Probably involved in tRNA maturation, by removing a 3'-trailer from precursor tRNA.</text>
</comment>
<comment type="catalytic activity">
    <reaction evidence="1">
        <text>Endonucleolytic cleavage of RNA, removing extra 3' nucleotides from tRNA precursor, generating 3' termini of tRNAs. A 3'-hydroxy group is left at the tRNA terminus and a 5'-phosphoryl group is left at the trailer molecule.</text>
        <dbReference type="EC" id="3.1.26.11"/>
    </reaction>
</comment>
<comment type="cofactor">
    <cofactor evidence="1">
        <name>Zn(2+)</name>
        <dbReference type="ChEBI" id="CHEBI:29105"/>
    </cofactor>
    <text evidence="1">Binds 2 Zn(2+) ions.</text>
</comment>
<comment type="subunit">
    <text evidence="1">Homodimer.</text>
</comment>
<comment type="similarity">
    <text evidence="1">Belongs to the RNase Z family.</text>
</comment>
<feature type="chain" id="PRO_1000187988" description="Ribonuclease Z">
    <location>
        <begin position="1"/>
        <end position="306"/>
    </location>
</feature>
<feature type="active site" description="Proton acceptor" evidence="1">
    <location>
        <position position="67"/>
    </location>
</feature>
<feature type="binding site" evidence="1">
    <location>
        <position position="63"/>
    </location>
    <ligand>
        <name>Zn(2+)</name>
        <dbReference type="ChEBI" id="CHEBI:29105"/>
        <label>1</label>
        <note>catalytic</note>
    </ligand>
</feature>
<feature type="binding site" evidence="1">
    <location>
        <position position="65"/>
    </location>
    <ligand>
        <name>Zn(2+)</name>
        <dbReference type="ChEBI" id="CHEBI:29105"/>
        <label>1</label>
        <note>catalytic</note>
    </ligand>
</feature>
<feature type="binding site" evidence="1">
    <location>
        <position position="67"/>
    </location>
    <ligand>
        <name>Zn(2+)</name>
        <dbReference type="ChEBI" id="CHEBI:29105"/>
        <label>2</label>
        <note>catalytic</note>
    </ligand>
</feature>
<feature type="binding site" evidence="1">
    <location>
        <position position="68"/>
    </location>
    <ligand>
        <name>Zn(2+)</name>
        <dbReference type="ChEBI" id="CHEBI:29105"/>
        <label>2</label>
        <note>catalytic</note>
    </ligand>
</feature>
<feature type="binding site" evidence="1">
    <location>
        <position position="141"/>
    </location>
    <ligand>
        <name>Zn(2+)</name>
        <dbReference type="ChEBI" id="CHEBI:29105"/>
        <label>1</label>
        <note>catalytic</note>
    </ligand>
</feature>
<feature type="binding site" evidence="1">
    <location>
        <position position="211"/>
    </location>
    <ligand>
        <name>Zn(2+)</name>
        <dbReference type="ChEBI" id="CHEBI:29105"/>
        <label>1</label>
        <note>catalytic</note>
    </ligand>
</feature>
<feature type="binding site" evidence="1">
    <location>
        <position position="211"/>
    </location>
    <ligand>
        <name>Zn(2+)</name>
        <dbReference type="ChEBI" id="CHEBI:29105"/>
        <label>2</label>
        <note>catalytic</note>
    </ligand>
</feature>
<feature type="binding site" evidence="1">
    <location>
        <position position="269"/>
    </location>
    <ligand>
        <name>Zn(2+)</name>
        <dbReference type="ChEBI" id="CHEBI:29105"/>
        <label>2</label>
        <note>catalytic</note>
    </ligand>
</feature>
<name>RNZ_STACT</name>
<protein>
    <recommendedName>
        <fullName evidence="1">Ribonuclease Z</fullName>
        <shortName evidence="1">RNase Z</shortName>
        <ecNumber evidence="1">3.1.26.11</ecNumber>
    </recommendedName>
    <alternativeName>
        <fullName evidence="1">tRNA 3 endonuclease</fullName>
    </alternativeName>
    <alternativeName>
        <fullName evidence="1">tRNase Z</fullName>
    </alternativeName>
</protein>
<organism>
    <name type="scientific">Staphylococcus carnosus (strain TM300)</name>
    <dbReference type="NCBI Taxonomy" id="396513"/>
    <lineage>
        <taxon>Bacteria</taxon>
        <taxon>Bacillati</taxon>
        <taxon>Bacillota</taxon>
        <taxon>Bacilli</taxon>
        <taxon>Bacillales</taxon>
        <taxon>Staphylococcaceae</taxon>
        <taxon>Staphylococcus</taxon>
    </lineage>
</organism>
<dbReference type="EC" id="3.1.26.11" evidence="1"/>
<dbReference type="EMBL" id="AM295250">
    <property type="protein sequence ID" value="CAL28037.1"/>
    <property type="molecule type" value="Genomic_DNA"/>
</dbReference>
<dbReference type="RefSeq" id="WP_015900378.1">
    <property type="nucleotide sequence ID" value="NC_012121.1"/>
</dbReference>
<dbReference type="SMR" id="B9DNT1"/>
<dbReference type="GeneID" id="93793555"/>
<dbReference type="KEGG" id="sca:SCA_1129"/>
<dbReference type="eggNOG" id="COG1234">
    <property type="taxonomic scope" value="Bacteria"/>
</dbReference>
<dbReference type="HOGENOM" id="CLU_031317_2_0_9"/>
<dbReference type="OrthoDB" id="9800940at2"/>
<dbReference type="BioCyc" id="SCAR396513:SCA_RS05655-MONOMER"/>
<dbReference type="Proteomes" id="UP000000444">
    <property type="component" value="Chromosome"/>
</dbReference>
<dbReference type="GO" id="GO:0042781">
    <property type="term" value="F:3'-tRNA processing endoribonuclease activity"/>
    <property type="evidence" value="ECO:0007669"/>
    <property type="project" value="UniProtKB-UniRule"/>
</dbReference>
<dbReference type="GO" id="GO:0008270">
    <property type="term" value="F:zinc ion binding"/>
    <property type="evidence" value="ECO:0007669"/>
    <property type="project" value="UniProtKB-UniRule"/>
</dbReference>
<dbReference type="CDD" id="cd07717">
    <property type="entry name" value="RNaseZ_ZiPD-like_MBL-fold"/>
    <property type="match status" value="1"/>
</dbReference>
<dbReference type="FunFam" id="3.60.15.10:FF:000002">
    <property type="entry name" value="Ribonuclease Z"/>
    <property type="match status" value="1"/>
</dbReference>
<dbReference type="Gene3D" id="3.60.15.10">
    <property type="entry name" value="Ribonuclease Z/Hydroxyacylglutathione hydrolase-like"/>
    <property type="match status" value="1"/>
</dbReference>
<dbReference type="HAMAP" id="MF_01818">
    <property type="entry name" value="RNase_Z_BN"/>
    <property type="match status" value="1"/>
</dbReference>
<dbReference type="InterPro" id="IPR001279">
    <property type="entry name" value="Metallo-B-lactamas"/>
</dbReference>
<dbReference type="InterPro" id="IPR036866">
    <property type="entry name" value="RibonucZ/Hydroxyglut_hydro"/>
</dbReference>
<dbReference type="InterPro" id="IPR013471">
    <property type="entry name" value="RNase_Z/BN"/>
</dbReference>
<dbReference type="NCBIfam" id="NF000801">
    <property type="entry name" value="PRK00055.1-3"/>
    <property type="match status" value="1"/>
</dbReference>
<dbReference type="NCBIfam" id="TIGR02651">
    <property type="entry name" value="RNase_Z"/>
    <property type="match status" value="1"/>
</dbReference>
<dbReference type="PANTHER" id="PTHR46018">
    <property type="entry name" value="ZINC PHOSPHODIESTERASE ELAC PROTEIN 1"/>
    <property type="match status" value="1"/>
</dbReference>
<dbReference type="PANTHER" id="PTHR46018:SF2">
    <property type="entry name" value="ZINC PHOSPHODIESTERASE ELAC PROTEIN 1"/>
    <property type="match status" value="1"/>
</dbReference>
<dbReference type="Pfam" id="PF12706">
    <property type="entry name" value="Lactamase_B_2"/>
    <property type="match status" value="1"/>
</dbReference>
<dbReference type="SUPFAM" id="SSF56281">
    <property type="entry name" value="Metallo-hydrolase/oxidoreductase"/>
    <property type="match status" value="1"/>
</dbReference>
<accession>B9DNT1</accession>
<proteinExistence type="inferred from homology"/>
<reference key="1">
    <citation type="journal article" date="2009" name="Appl. Environ. Microbiol.">
        <title>Genome analysis of the meat starter culture bacterium Staphylococcus carnosus TM300.</title>
        <authorList>
            <person name="Rosenstein R."/>
            <person name="Nerz C."/>
            <person name="Biswas L."/>
            <person name="Resch A."/>
            <person name="Raddatz G."/>
            <person name="Schuster S.C."/>
            <person name="Goetz F."/>
        </authorList>
    </citation>
    <scope>NUCLEOTIDE SEQUENCE [LARGE SCALE GENOMIC DNA]</scope>
    <source>
        <strain>TM300</strain>
    </source>
</reference>
<evidence type="ECO:0000255" key="1">
    <source>
        <dbReference type="HAMAP-Rule" id="MF_01818"/>
    </source>
</evidence>
<keyword id="KW-0255">Endonuclease</keyword>
<keyword id="KW-0378">Hydrolase</keyword>
<keyword id="KW-0479">Metal-binding</keyword>
<keyword id="KW-0540">Nuclease</keyword>
<keyword id="KW-1185">Reference proteome</keyword>
<keyword id="KW-0819">tRNA processing</keyword>
<keyword id="KW-0862">Zinc</keyword>